<proteinExistence type="inferred from homology"/>
<protein>
    <recommendedName>
        <fullName>Type II secretion system protein C</fullName>
        <shortName>T2SS protein C</shortName>
    </recommendedName>
    <alternativeName>
        <fullName>General secretion pathway protein C</fullName>
    </alternativeName>
</protein>
<gene>
    <name type="primary">exeC</name>
</gene>
<dbReference type="EMBL" id="X66504">
    <property type="protein sequence ID" value="CAA47125.1"/>
    <property type="molecule type" value="Genomic_DNA"/>
</dbReference>
<dbReference type="SMR" id="P45790"/>
<dbReference type="eggNOG" id="COG3031">
    <property type="taxonomic scope" value="Bacteria"/>
</dbReference>
<dbReference type="GO" id="GO:0005886">
    <property type="term" value="C:plasma membrane"/>
    <property type="evidence" value="ECO:0007669"/>
    <property type="project" value="UniProtKB-SubCell"/>
</dbReference>
<dbReference type="GO" id="GO:0015627">
    <property type="term" value="C:type II protein secretion system complex"/>
    <property type="evidence" value="ECO:0007669"/>
    <property type="project" value="InterPro"/>
</dbReference>
<dbReference type="GO" id="GO:0015628">
    <property type="term" value="P:protein secretion by the type II secretion system"/>
    <property type="evidence" value="ECO:0007669"/>
    <property type="project" value="InterPro"/>
</dbReference>
<dbReference type="Gene3D" id="2.30.30.830">
    <property type="match status" value="1"/>
</dbReference>
<dbReference type="Gene3D" id="2.30.42.10">
    <property type="match status" value="1"/>
</dbReference>
<dbReference type="InterPro" id="IPR036034">
    <property type="entry name" value="PDZ_sf"/>
</dbReference>
<dbReference type="InterPro" id="IPR024961">
    <property type="entry name" value="T2SS_GspC_N"/>
</dbReference>
<dbReference type="InterPro" id="IPR001639">
    <property type="entry name" value="T2SS_protein-GspC"/>
</dbReference>
<dbReference type="NCBIfam" id="TIGR01713">
    <property type="entry name" value="typeII_sec_gspC"/>
    <property type="match status" value="1"/>
</dbReference>
<dbReference type="Pfam" id="PF11356">
    <property type="entry name" value="T2SSC"/>
    <property type="match status" value="1"/>
</dbReference>
<dbReference type="PRINTS" id="PR00810">
    <property type="entry name" value="BCTERIALGSPC"/>
</dbReference>
<dbReference type="SUPFAM" id="SSF50156">
    <property type="entry name" value="PDZ domain-like"/>
    <property type="match status" value="1"/>
</dbReference>
<dbReference type="PROSITE" id="PS01141">
    <property type="entry name" value="T2SP_C"/>
    <property type="match status" value="1"/>
</dbReference>
<reference key="1">
    <citation type="submission" date="1994-09" db="EMBL/GenBank/DDBJ databases">
        <authorList>
            <person name="Howard S.P."/>
        </authorList>
    </citation>
    <scope>NUCLEOTIDE SEQUENCE [GENOMIC DNA]</scope>
    <source>
        <strain>Ah65</strain>
    </source>
</reference>
<evidence type="ECO:0000250" key="1"/>
<evidence type="ECO:0000255" key="2"/>
<evidence type="ECO:0000305" key="3"/>
<feature type="chain" id="PRO_0000214998" description="Type II secretion system protein C">
    <location>
        <begin position="1"/>
        <end position="290"/>
    </location>
</feature>
<feature type="topological domain" description="Cytoplasmic" evidence="2">
    <location>
        <begin position="1"/>
        <end position="28"/>
    </location>
</feature>
<feature type="transmembrane region" description="Helical" evidence="2">
    <location>
        <begin position="29"/>
        <end position="46"/>
    </location>
</feature>
<feature type="topological domain" description="Periplasmic" evidence="2">
    <location>
        <begin position="47"/>
        <end position="290"/>
    </location>
</feature>
<name>GSPC_AERHY</name>
<accession>P45790</accession>
<comment type="function">
    <text evidence="1">Involved in a type II secretion system (T2SS, formerly general secretion pathway, GSP) for the export of proteins.</text>
</comment>
<comment type="subcellular location">
    <subcellularLocation>
        <location evidence="3">Cell inner membrane</location>
    </subcellularLocation>
</comment>
<comment type="similarity">
    <text evidence="3">Belongs to the GSP C family.</text>
</comment>
<keyword id="KW-0997">Cell inner membrane</keyword>
<keyword id="KW-1003">Cell membrane</keyword>
<keyword id="KW-0472">Membrane</keyword>
<keyword id="KW-0653">Protein transport</keyword>
<keyword id="KW-0812">Transmembrane</keyword>
<keyword id="KW-1133">Transmembrane helix</keyword>
<keyword id="KW-0813">Transport</keyword>
<organism>
    <name type="scientific">Aeromonas hydrophila</name>
    <dbReference type="NCBI Taxonomy" id="644"/>
    <lineage>
        <taxon>Bacteria</taxon>
        <taxon>Pseudomonadati</taxon>
        <taxon>Pseudomonadota</taxon>
        <taxon>Gammaproteobacteria</taxon>
        <taxon>Aeromonadales</taxon>
        <taxon>Aeromonadaceae</taxon>
        <taxon>Aeromonas</taxon>
    </lineage>
</organism>
<sequence length="290" mass="31363">MTLPFRNDLLSSLLARCKTVPLSRFSQPLFWLLLLLLAHQCAGLTWRLLDLGSQQASQPWQPAMVASQGQGSARLDLSGISRLSLFGKAKQQAQAADAVAADAPKTQLNAQLNGVLASSDPAKSIAIIAHNGVQNSYGIGDFIDGTQAKIRQVFADRVIIERDGRDETLMLDGEEYGKPLPKPGNQDDKLSSVRSELLGNPGKITDYLNISPVRVDGRMVGYRLNPGSNPELFNQLGLVANDMAVSINGLDLRDNAQAMQAMQQVAGATEMTVTVERQGQLYDVYVGLSE</sequence>